<proteinExistence type="inferred from homology"/>
<sequence length="238" mass="26486">MNVTLFVTCLVDLFHVNVGKATVELLERLGCTIHFPEAQTCCGQPAYNSGYVKEAKEAMKHMIRTFEHAEYIVTPSGSCATMFKEYPHIFKGDGEWEARAKRVADKTYELTQFIVDVLQVEDVGARLEGKATYHTSCHMTRLLGVKDAPLTLLQHVKGLEVVPLPNAHNCCGFGGTFSVKMGPISEQMVDEKIQCIEQVEADYLIGADCGCLMNIGGRIERKGKPIRVMHIAEVLNHR</sequence>
<evidence type="ECO:0000255" key="1">
    <source>
        <dbReference type="HAMAP-Rule" id="MF_02105"/>
    </source>
</evidence>
<name>LUTA_ANOFW</name>
<comment type="function">
    <text evidence="1">Is involved in L-lactate degradation and allows cells to grow with lactate as the sole carbon source.</text>
</comment>
<comment type="similarity">
    <text evidence="1">Belongs to the LutA/YkgE family.</text>
</comment>
<gene>
    <name evidence="1" type="primary">lutA</name>
    <name type="ordered locus">Aflv_2009</name>
</gene>
<feature type="chain" id="PRO_0000384016" description="Lactate utilization protein A">
    <location>
        <begin position="1"/>
        <end position="238"/>
    </location>
</feature>
<organism>
    <name type="scientific">Anoxybacillus flavithermus (strain DSM 21510 / WK1)</name>
    <dbReference type="NCBI Taxonomy" id="491915"/>
    <lineage>
        <taxon>Bacteria</taxon>
        <taxon>Bacillati</taxon>
        <taxon>Bacillota</taxon>
        <taxon>Bacilli</taxon>
        <taxon>Bacillales</taxon>
        <taxon>Anoxybacillaceae</taxon>
        <taxon>Anoxybacillus</taxon>
    </lineage>
</organism>
<accession>B7GLD6</accession>
<dbReference type="EMBL" id="CP000922">
    <property type="protein sequence ID" value="ACJ34368.1"/>
    <property type="molecule type" value="Genomic_DNA"/>
</dbReference>
<dbReference type="RefSeq" id="WP_012575555.1">
    <property type="nucleotide sequence ID" value="NC_011567.1"/>
</dbReference>
<dbReference type="SMR" id="B7GLD6"/>
<dbReference type="STRING" id="491915.Aflv_2009"/>
<dbReference type="GeneID" id="7038261"/>
<dbReference type="KEGG" id="afl:Aflv_2009"/>
<dbReference type="PATRIC" id="fig|491915.6.peg.2062"/>
<dbReference type="eggNOG" id="COG0247">
    <property type="taxonomic scope" value="Bacteria"/>
</dbReference>
<dbReference type="HOGENOM" id="CLU_023081_1_0_9"/>
<dbReference type="Proteomes" id="UP000000742">
    <property type="component" value="Chromosome"/>
</dbReference>
<dbReference type="GO" id="GO:0005829">
    <property type="term" value="C:cytosol"/>
    <property type="evidence" value="ECO:0007669"/>
    <property type="project" value="TreeGrafter"/>
</dbReference>
<dbReference type="GO" id="GO:0016491">
    <property type="term" value="F:oxidoreductase activity"/>
    <property type="evidence" value="ECO:0007669"/>
    <property type="project" value="UniProtKB-ARBA"/>
</dbReference>
<dbReference type="GO" id="GO:0006089">
    <property type="term" value="P:lactate metabolic process"/>
    <property type="evidence" value="ECO:0007669"/>
    <property type="project" value="UniProtKB-UniRule"/>
</dbReference>
<dbReference type="HAMAP" id="MF_02105">
    <property type="entry name" value="LutA"/>
    <property type="match status" value="1"/>
</dbReference>
<dbReference type="InterPro" id="IPR004017">
    <property type="entry name" value="Cys_rich_dom"/>
</dbReference>
<dbReference type="InterPro" id="IPR022822">
    <property type="entry name" value="LutA"/>
</dbReference>
<dbReference type="PANTHER" id="PTHR30296:SF0">
    <property type="entry name" value="LACTATE UTILIZATION PROTEIN A"/>
    <property type="match status" value="1"/>
</dbReference>
<dbReference type="PANTHER" id="PTHR30296">
    <property type="entry name" value="UNCHARACTERIZED PROTEIN YKGE"/>
    <property type="match status" value="1"/>
</dbReference>
<dbReference type="Pfam" id="PF02754">
    <property type="entry name" value="CCG"/>
    <property type="match status" value="2"/>
</dbReference>
<protein>
    <recommendedName>
        <fullName evidence="1">Lactate utilization protein A</fullName>
    </recommendedName>
</protein>
<reference key="1">
    <citation type="journal article" date="2008" name="Genome Biol.">
        <title>Encapsulated in silica: genome, proteome and physiology of the thermophilic bacterium Anoxybacillus flavithermus WK1.</title>
        <authorList>
            <person name="Saw J.H."/>
            <person name="Mountain B.W."/>
            <person name="Feng L."/>
            <person name="Omelchenko M.V."/>
            <person name="Hou S."/>
            <person name="Saito J.A."/>
            <person name="Stott M.B."/>
            <person name="Li D."/>
            <person name="Zhao G."/>
            <person name="Wu J."/>
            <person name="Galperin M.Y."/>
            <person name="Koonin E.V."/>
            <person name="Makarova K.S."/>
            <person name="Wolf Y.I."/>
            <person name="Rigden D.J."/>
            <person name="Dunfield P.F."/>
            <person name="Wang L."/>
            <person name="Alam M."/>
        </authorList>
    </citation>
    <scope>NUCLEOTIDE SEQUENCE [LARGE SCALE GENOMIC DNA]</scope>
    <source>
        <strain>DSM 21510 / WK1</strain>
    </source>
</reference>